<gene>
    <name evidence="1" type="primary">viaA</name>
    <name type="ordered locus">ETA_00040</name>
</gene>
<proteinExistence type="inferred from homology"/>
<keyword id="KW-0143">Chaperone</keyword>
<keyword id="KW-0963">Cytoplasm</keyword>
<keyword id="KW-1185">Reference proteome</keyword>
<reference key="1">
    <citation type="journal article" date="2008" name="Environ. Microbiol.">
        <title>The genome of Erwinia tasmaniensis strain Et1/99, a non-pathogenic bacterium in the genus Erwinia.</title>
        <authorList>
            <person name="Kube M."/>
            <person name="Migdoll A.M."/>
            <person name="Mueller I."/>
            <person name="Kuhl H."/>
            <person name="Beck A."/>
            <person name="Reinhardt R."/>
            <person name="Geider K."/>
        </authorList>
    </citation>
    <scope>NUCLEOTIDE SEQUENCE [LARGE SCALE GENOMIC DNA]</scope>
    <source>
        <strain>DSM 17950 / CFBP 7177 / CIP 109463 / NCPPB 4357 / Et1/99</strain>
    </source>
</reference>
<name>VIAA_ERWT9</name>
<sequence>MISLDTLSLFLSINENDLVEELVMTLLASPQLAVFFEKFPVLKNVLTRDLPRHKADILQQLKSTAVPPLLEAEFQRFQQYQALSLRDFNAGLPDLLAWLAHQASPFNEKAQALIANNDTQQCNSAQQTLFLQRWRLSLTLQTLTLNQQLLDKEREKLLAELQQRLAMSGQLAPVLADDDEAAAGRLWDLTRGELQRDDYQLIVQYGDFLASQPELLKLAQRLGRSREAKPVPSDDAPAEIFHQPVREPASVPEEVNGLHQSDDILRLLPPELATLGISELEIEFYRRLVEKRLLTYRLQGESWHDHITQRPVAHQHHDPQQRGPFIVCVDTSGSMGGFNERCAKAFCLALLKVALAEKRRCYIMLFAHQVISYELTAGDGISQAIRFLSQRFRGGTDLAACLEAVLVKLSDVQWHDADAVVLSDFIAQRLPDALITRVRTHQEQQRQRFHAVAMSDHGKPGIMRIFNHIWRFDTGLKSRLLRRWKR</sequence>
<protein>
    <recommendedName>
        <fullName evidence="1">Regulatory protein ViaA</fullName>
    </recommendedName>
    <alternativeName>
        <fullName evidence="1">VWA interacting with AAA+ ATPase</fullName>
    </alternativeName>
</protein>
<accession>B2VFC7</accession>
<comment type="function">
    <text evidence="1">Component of the RavA-ViaA chaperone complex, which may act on the membrane to optimize the function of some of the respiratory chains. ViaA stimulates the ATPase activity of RavA.</text>
</comment>
<comment type="subunit">
    <text evidence="1">Homodimer. Interacts with RavA.</text>
</comment>
<comment type="subcellular location">
    <subcellularLocation>
        <location evidence="1">Cytoplasm</location>
    </subcellularLocation>
</comment>
<comment type="similarity">
    <text evidence="1">Belongs to the ViaA family.</text>
</comment>
<evidence type="ECO:0000255" key="1">
    <source>
        <dbReference type="HAMAP-Rule" id="MF_01626"/>
    </source>
</evidence>
<dbReference type="EMBL" id="CU468135">
    <property type="protein sequence ID" value="CAO95050.1"/>
    <property type="molecule type" value="Genomic_DNA"/>
</dbReference>
<dbReference type="RefSeq" id="WP_012439784.1">
    <property type="nucleotide sequence ID" value="NC_010694.1"/>
</dbReference>
<dbReference type="SMR" id="B2VFC7"/>
<dbReference type="STRING" id="465817.ETA_00040"/>
<dbReference type="KEGG" id="eta:ETA_00040"/>
<dbReference type="eggNOG" id="COG2425">
    <property type="taxonomic scope" value="Bacteria"/>
</dbReference>
<dbReference type="HOGENOM" id="CLU_022130_0_0_6"/>
<dbReference type="OrthoDB" id="387240at2"/>
<dbReference type="Proteomes" id="UP000001726">
    <property type="component" value="Chromosome"/>
</dbReference>
<dbReference type="GO" id="GO:0005829">
    <property type="term" value="C:cytosol"/>
    <property type="evidence" value="ECO:0007669"/>
    <property type="project" value="TreeGrafter"/>
</dbReference>
<dbReference type="CDD" id="cd01462">
    <property type="entry name" value="VWA_YIEM_type"/>
    <property type="match status" value="1"/>
</dbReference>
<dbReference type="Gene3D" id="3.40.50.410">
    <property type="entry name" value="von Willebrand factor, type A domain"/>
    <property type="match status" value="1"/>
</dbReference>
<dbReference type="HAMAP" id="MF_01626">
    <property type="entry name" value="ViaA"/>
    <property type="match status" value="1"/>
</dbReference>
<dbReference type="InterPro" id="IPR023481">
    <property type="entry name" value="Uncharacterised_ViaA"/>
</dbReference>
<dbReference type="InterPro" id="IPR002035">
    <property type="entry name" value="VWF_A"/>
</dbReference>
<dbReference type="InterPro" id="IPR036465">
    <property type="entry name" value="vWFA_dom_sf"/>
</dbReference>
<dbReference type="NCBIfam" id="NF008230">
    <property type="entry name" value="PRK10997.1"/>
    <property type="match status" value="1"/>
</dbReference>
<dbReference type="PANTHER" id="PTHR36846">
    <property type="entry name" value="PROTEIN VIAA"/>
    <property type="match status" value="1"/>
</dbReference>
<dbReference type="PANTHER" id="PTHR36846:SF1">
    <property type="entry name" value="PROTEIN VIAA"/>
    <property type="match status" value="1"/>
</dbReference>
<dbReference type="Pfam" id="PF13519">
    <property type="entry name" value="VWA_2"/>
    <property type="match status" value="1"/>
</dbReference>
<dbReference type="SUPFAM" id="SSF53300">
    <property type="entry name" value="vWA-like"/>
    <property type="match status" value="1"/>
</dbReference>
<feature type="chain" id="PRO_1000186153" description="Regulatory protein ViaA">
    <location>
        <begin position="1"/>
        <end position="486"/>
    </location>
</feature>
<organism>
    <name type="scientific">Erwinia tasmaniensis (strain DSM 17950 / CFBP 7177 / CIP 109463 / NCPPB 4357 / Et1/99)</name>
    <dbReference type="NCBI Taxonomy" id="465817"/>
    <lineage>
        <taxon>Bacteria</taxon>
        <taxon>Pseudomonadati</taxon>
        <taxon>Pseudomonadota</taxon>
        <taxon>Gammaproteobacteria</taxon>
        <taxon>Enterobacterales</taxon>
        <taxon>Erwiniaceae</taxon>
        <taxon>Erwinia</taxon>
    </lineage>
</organism>